<evidence type="ECO:0000255" key="1">
    <source>
        <dbReference type="HAMAP-Rule" id="MF_00223"/>
    </source>
</evidence>
<protein>
    <recommendedName>
        <fullName evidence="1">GTP cyclohydrolase 1</fullName>
        <ecNumber evidence="1">3.5.4.16</ecNumber>
    </recommendedName>
    <alternativeName>
        <fullName evidence="1">GTP cyclohydrolase I</fullName>
        <shortName evidence="1">GTP-CH-I</shortName>
    </alternativeName>
</protein>
<sequence>MKPTPAELYANLISSTGEDLQRPGLQGTPARAATAFEYLTSGYKQSVQEVVNDALFPSDSNDMVVVRDIELFSLCEHHMLPFIGKAHVGYIPTGKVLGLSKVARIIDMYARRLQIQEQLTHQVASTIAEVTGAAGVGVIIEAKHLCMMMRGVEKQNSVMKTSAMLGSFRANLSTRSEFLALLNN</sequence>
<name>GCH1_TERTT</name>
<organism>
    <name type="scientific">Teredinibacter turnerae (strain ATCC 39867 / T7901)</name>
    <dbReference type="NCBI Taxonomy" id="377629"/>
    <lineage>
        <taxon>Bacteria</taxon>
        <taxon>Pseudomonadati</taxon>
        <taxon>Pseudomonadota</taxon>
        <taxon>Gammaproteobacteria</taxon>
        <taxon>Cellvibrionales</taxon>
        <taxon>Cellvibrionaceae</taxon>
        <taxon>Teredinibacter</taxon>
    </lineage>
</organism>
<feature type="chain" id="PRO_1000204300" description="GTP cyclohydrolase 1">
    <location>
        <begin position="1"/>
        <end position="184"/>
    </location>
</feature>
<feature type="binding site" evidence="1">
    <location>
        <position position="75"/>
    </location>
    <ligand>
        <name>Zn(2+)</name>
        <dbReference type="ChEBI" id="CHEBI:29105"/>
    </ligand>
</feature>
<feature type="binding site" evidence="1">
    <location>
        <position position="78"/>
    </location>
    <ligand>
        <name>Zn(2+)</name>
        <dbReference type="ChEBI" id="CHEBI:29105"/>
    </ligand>
</feature>
<feature type="binding site" evidence="1">
    <location>
        <position position="146"/>
    </location>
    <ligand>
        <name>Zn(2+)</name>
        <dbReference type="ChEBI" id="CHEBI:29105"/>
    </ligand>
</feature>
<dbReference type="EC" id="3.5.4.16" evidence="1"/>
<dbReference type="EMBL" id="CP001614">
    <property type="protein sequence ID" value="ACR12140.1"/>
    <property type="molecule type" value="Genomic_DNA"/>
</dbReference>
<dbReference type="RefSeq" id="WP_015818252.1">
    <property type="nucleotide sequence ID" value="NC_012997.1"/>
</dbReference>
<dbReference type="SMR" id="C5BL73"/>
<dbReference type="STRING" id="377629.TERTU_2509"/>
<dbReference type="KEGG" id="ttu:TERTU_2509"/>
<dbReference type="eggNOG" id="COG0302">
    <property type="taxonomic scope" value="Bacteria"/>
</dbReference>
<dbReference type="HOGENOM" id="CLU_049768_3_1_6"/>
<dbReference type="OrthoDB" id="9801207at2"/>
<dbReference type="UniPathway" id="UPA00848">
    <property type="reaction ID" value="UER00151"/>
</dbReference>
<dbReference type="Proteomes" id="UP000009080">
    <property type="component" value="Chromosome"/>
</dbReference>
<dbReference type="GO" id="GO:0005737">
    <property type="term" value="C:cytoplasm"/>
    <property type="evidence" value="ECO:0007669"/>
    <property type="project" value="TreeGrafter"/>
</dbReference>
<dbReference type="GO" id="GO:0005525">
    <property type="term" value="F:GTP binding"/>
    <property type="evidence" value="ECO:0007669"/>
    <property type="project" value="UniProtKB-KW"/>
</dbReference>
<dbReference type="GO" id="GO:0003934">
    <property type="term" value="F:GTP cyclohydrolase I activity"/>
    <property type="evidence" value="ECO:0007669"/>
    <property type="project" value="UniProtKB-UniRule"/>
</dbReference>
<dbReference type="GO" id="GO:0008270">
    <property type="term" value="F:zinc ion binding"/>
    <property type="evidence" value="ECO:0007669"/>
    <property type="project" value="UniProtKB-UniRule"/>
</dbReference>
<dbReference type="GO" id="GO:0006730">
    <property type="term" value="P:one-carbon metabolic process"/>
    <property type="evidence" value="ECO:0007669"/>
    <property type="project" value="UniProtKB-UniRule"/>
</dbReference>
<dbReference type="GO" id="GO:0006729">
    <property type="term" value="P:tetrahydrobiopterin biosynthetic process"/>
    <property type="evidence" value="ECO:0007669"/>
    <property type="project" value="TreeGrafter"/>
</dbReference>
<dbReference type="GO" id="GO:0046654">
    <property type="term" value="P:tetrahydrofolate biosynthetic process"/>
    <property type="evidence" value="ECO:0007669"/>
    <property type="project" value="UniProtKB-UniRule"/>
</dbReference>
<dbReference type="FunFam" id="3.30.1130.10:FF:000001">
    <property type="entry name" value="GTP cyclohydrolase 1"/>
    <property type="match status" value="1"/>
</dbReference>
<dbReference type="Gene3D" id="1.10.286.10">
    <property type="match status" value="1"/>
</dbReference>
<dbReference type="Gene3D" id="3.30.1130.10">
    <property type="match status" value="1"/>
</dbReference>
<dbReference type="HAMAP" id="MF_00223">
    <property type="entry name" value="FolE"/>
    <property type="match status" value="1"/>
</dbReference>
<dbReference type="InterPro" id="IPR043133">
    <property type="entry name" value="GTP-CH-I_C/QueF"/>
</dbReference>
<dbReference type="InterPro" id="IPR043134">
    <property type="entry name" value="GTP-CH-I_N"/>
</dbReference>
<dbReference type="InterPro" id="IPR001474">
    <property type="entry name" value="GTP_CycHdrlase_I"/>
</dbReference>
<dbReference type="InterPro" id="IPR018234">
    <property type="entry name" value="GTP_CycHdrlase_I_CS"/>
</dbReference>
<dbReference type="InterPro" id="IPR020602">
    <property type="entry name" value="GTP_CycHdrlase_I_dom"/>
</dbReference>
<dbReference type="NCBIfam" id="TIGR00063">
    <property type="entry name" value="folE"/>
    <property type="match status" value="1"/>
</dbReference>
<dbReference type="NCBIfam" id="NF006825">
    <property type="entry name" value="PRK09347.1-2"/>
    <property type="match status" value="1"/>
</dbReference>
<dbReference type="NCBIfam" id="NF006826">
    <property type="entry name" value="PRK09347.1-3"/>
    <property type="match status" value="1"/>
</dbReference>
<dbReference type="PANTHER" id="PTHR11109:SF7">
    <property type="entry name" value="GTP CYCLOHYDROLASE 1"/>
    <property type="match status" value="1"/>
</dbReference>
<dbReference type="PANTHER" id="PTHR11109">
    <property type="entry name" value="GTP CYCLOHYDROLASE I"/>
    <property type="match status" value="1"/>
</dbReference>
<dbReference type="Pfam" id="PF01227">
    <property type="entry name" value="GTP_cyclohydroI"/>
    <property type="match status" value="1"/>
</dbReference>
<dbReference type="SUPFAM" id="SSF55620">
    <property type="entry name" value="Tetrahydrobiopterin biosynthesis enzymes-like"/>
    <property type="match status" value="1"/>
</dbReference>
<dbReference type="PROSITE" id="PS00859">
    <property type="entry name" value="GTP_CYCLOHYDROL_1_1"/>
    <property type="match status" value="1"/>
</dbReference>
<keyword id="KW-0342">GTP-binding</keyword>
<keyword id="KW-0378">Hydrolase</keyword>
<keyword id="KW-0479">Metal-binding</keyword>
<keyword id="KW-0547">Nucleotide-binding</keyword>
<keyword id="KW-0554">One-carbon metabolism</keyword>
<keyword id="KW-1185">Reference proteome</keyword>
<keyword id="KW-0862">Zinc</keyword>
<reference key="1">
    <citation type="journal article" date="2009" name="PLoS ONE">
        <title>The complete genome of Teredinibacter turnerae T7901: an intracellular endosymbiont of marine wood-boring bivalves (shipworms).</title>
        <authorList>
            <person name="Yang J.C."/>
            <person name="Madupu R."/>
            <person name="Durkin A.S."/>
            <person name="Ekborg N.A."/>
            <person name="Pedamallu C.S."/>
            <person name="Hostetler J.B."/>
            <person name="Radune D."/>
            <person name="Toms B.S."/>
            <person name="Henrissat B."/>
            <person name="Coutinho P.M."/>
            <person name="Schwarz S."/>
            <person name="Field L."/>
            <person name="Trindade-Silva A.E."/>
            <person name="Soares C.A.G."/>
            <person name="Elshahawi S."/>
            <person name="Hanora A."/>
            <person name="Schmidt E.W."/>
            <person name="Haygood M.G."/>
            <person name="Posfai J."/>
            <person name="Benner J."/>
            <person name="Madinger C."/>
            <person name="Nove J."/>
            <person name="Anton B."/>
            <person name="Chaudhary K."/>
            <person name="Foster J."/>
            <person name="Holman A."/>
            <person name="Kumar S."/>
            <person name="Lessard P.A."/>
            <person name="Luyten Y.A."/>
            <person name="Slatko B."/>
            <person name="Wood N."/>
            <person name="Wu B."/>
            <person name="Teplitski M."/>
            <person name="Mougous J.D."/>
            <person name="Ward N."/>
            <person name="Eisen J.A."/>
            <person name="Badger J.H."/>
            <person name="Distel D.L."/>
        </authorList>
    </citation>
    <scope>NUCLEOTIDE SEQUENCE [LARGE SCALE GENOMIC DNA]</scope>
    <source>
        <strain>ATCC 39867 / T7901</strain>
    </source>
</reference>
<proteinExistence type="inferred from homology"/>
<comment type="catalytic activity">
    <reaction evidence="1">
        <text>GTP + H2O = 7,8-dihydroneopterin 3'-triphosphate + formate + H(+)</text>
        <dbReference type="Rhea" id="RHEA:17473"/>
        <dbReference type="ChEBI" id="CHEBI:15377"/>
        <dbReference type="ChEBI" id="CHEBI:15378"/>
        <dbReference type="ChEBI" id="CHEBI:15740"/>
        <dbReference type="ChEBI" id="CHEBI:37565"/>
        <dbReference type="ChEBI" id="CHEBI:58462"/>
        <dbReference type="EC" id="3.5.4.16"/>
    </reaction>
</comment>
<comment type="pathway">
    <text evidence="1">Cofactor biosynthesis; 7,8-dihydroneopterin triphosphate biosynthesis; 7,8-dihydroneopterin triphosphate from GTP: step 1/1.</text>
</comment>
<comment type="subunit">
    <text evidence="1">Homomer.</text>
</comment>
<comment type="similarity">
    <text evidence="1">Belongs to the GTP cyclohydrolase I family.</text>
</comment>
<gene>
    <name evidence="1" type="primary">folE</name>
    <name type="ordered locus">TERTU_2509</name>
</gene>
<accession>C5BL73</accession>